<proteinExistence type="evidence at transcript level"/>
<sequence>MWLEWLVAWSWSLDGLRDCIATGIQSVRDCDGTAVITVACLLVLFVWYCYHVGREQPRPHVSVNSLLQGVDANGLQNGSMYCQSPECVRCTHHDGLNQKLYHNLQEYAKRYSWSGMGRIHKGIREQGRYLSSQPSIQKPEVFFLPDLPTTPYFPRDAQKHDVELLERNFQAILCEFEALYKAFSNCSLPQGWKVNSTPSGEWFTFDFVSQGVCVPRNCRKCPRTYRLLGSLRTCIGNNVFGNACISVLSPGTVITEHYGPTNIRIRCHLGLKTPNGCELVVGGEPQCWAEGRCLLFDDSFLHTSFHEGSAEDGPRVVFMVDLWHPNVAAAERQALDFIFAPGR</sequence>
<comment type="function">
    <text evidence="1">May function as 2-oxoglutarate-dependent dioxygenase.</text>
</comment>
<comment type="cofactor">
    <cofactor evidence="1">
        <name>Fe cation</name>
        <dbReference type="ChEBI" id="CHEBI:24875"/>
    </cofactor>
</comment>
<comment type="subcellular location">
    <subcellularLocation>
        <location evidence="3">Membrane</location>
        <topology evidence="3">Single-pass type II membrane protein</topology>
    </subcellularLocation>
</comment>
<comment type="similarity">
    <text evidence="3">Belongs to the aspartyl/asparaginyl beta-hydroxylase family.</text>
</comment>
<gene>
    <name type="primary">Asphd2</name>
</gene>
<reference key="1">
    <citation type="journal article" date="2004" name="Genome Res.">
        <title>The status, quality, and expansion of the NIH full-length cDNA project: the Mammalian Gene Collection (MGC).</title>
        <authorList>
            <consortium name="The MGC Project Team"/>
        </authorList>
    </citation>
    <scope>NUCLEOTIDE SEQUENCE [LARGE SCALE MRNA]</scope>
    <source>
        <tissue>Brain</tissue>
    </source>
</reference>
<name>ASPH2_RAT</name>
<dbReference type="EC" id="1.14.11.-"/>
<dbReference type="EMBL" id="BC088863">
    <property type="protein sequence ID" value="AAH88863.1"/>
    <property type="molecule type" value="mRNA"/>
</dbReference>
<dbReference type="RefSeq" id="NP_001009716.1">
    <property type="nucleotide sequence ID" value="NM_001009716.2"/>
</dbReference>
<dbReference type="RefSeq" id="XP_008767573.1">
    <property type="nucleotide sequence ID" value="XM_008769351.4"/>
</dbReference>
<dbReference type="RefSeq" id="XP_017453903.1">
    <property type="nucleotide sequence ID" value="XM_017598414.3"/>
</dbReference>
<dbReference type="RefSeq" id="XP_017453904.1">
    <property type="nucleotide sequence ID" value="XM_017598415.3"/>
</dbReference>
<dbReference type="RefSeq" id="XP_017453905.1">
    <property type="nucleotide sequence ID" value="XM_017598416.3"/>
</dbReference>
<dbReference type="RefSeq" id="XP_017453906.1">
    <property type="nucleotide sequence ID" value="XM_017598417.3"/>
</dbReference>
<dbReference type="RefSeq" id="XP_038945577.1">
    <property type="nucleotide sequence ID" value="XM_039089649.2"/>
</dbReference>
<dbReference type="RefSeq" id="XP_038945579.1">
    <property type="nucleotide sequence ID" value="XM_039089651.2"/>
</dbReference>
<dbReference type="RefSeq" id="XP_038945580.1">
    <property type="nucleotide sequence ID" value="XM_039089652.2"/>
</dbReference>
<dbReference type="SMR" id="Q5HZW3"/>
<dbReference type="FunCoup" id="Q5HZW3">
    <property type="interactions" value="1321"/>
</dbReference>
<dbReference type="STRING" id="10116.ENSRNOP00000073904"/>
<dbReference type="GlyCosmos" id="Q5HZW3">
    <property type="glycosylation" value="2 sites, No reported glycans"/>
</dbReference>
<dbReference type="GlyGen" id="Q5HZW3">
    <property type="glycosylation" value="2 sites"/>
</dbReference>
<dbReference type="PhosphoSitePlus" id="Q5HZW3"/>
<dbReference type="PaxDb" id="10116-ENSRNOP00000000823"/>
<dbReference type="Ensembl" id="ENSRNOT00000079190.2">
    <property type="protein sequence ID" value="ENSRNOP00000068694.1"/>
    <property type="gene ID" value="ENSRNOG00000061004.2"/>
</dbReference>
<dbReference type="GeneID" id="364948"/>
<dbReference type="KEGG" id="rno:364948"/>
<dbReference type="AGR" id="RGD:1306020"/>
<dbReference type="CTD" id="57168"/>
<dbReference type="RGD" id="1306020">
    <property type="gene designation" value="Asphd2"/>
</dbReference>
<dbReference type="eggNOG" id="KOG3696">
    <property type="taxonomic scope" value="Eukaryota"/>
</dbReference>
<dbReference type="GeneTree" id="ENSGT00940000159252"/>
<dbReference type="HOGENOM" id="CLU_059279_3_0_1"/>
<dbReference type="InParanoid" id="Q5HZW3"/>
<dbReference type="OMA" id="HIPSKDC"/>
<dbReference type="OrthoDB" id="438431at2759"/>
<dbReference type="PhylomeDB" id="Q5HZW3"/>
<dbReference type="TreeFam" id="TF312799"/>
<dbReference type="PRO" id="PR:Q5HZW3"/>
<dbReference type="Proteomes" id="UP000002494">
    <property type="component" value="Chromosome 12"/>
</dbReference>
<dbReference type="Bgee" id="ENSRNOG00000061004">
    <property type="expression patterns" value="Expressed in frontal cortex and 2 other cell types or tissues"/>
</dbReference>
<dbReference type="GO" id="GO:0016020">
    <property type="term" value="C:membrane"/>
    <property type="evidence" value="ECO:0007669"/>
    <property type="project" value="UniProtKB-SubCell"/>
</dbReference>
<dbReference type="GO" id="GO:0051213">
    <property type="term" value="F:dioxygenase activity"/>
    <property type="evidence" value="ECO:0007669"/>
    <property type="project" value="UniProtKB-KW"/>
</dbReference>
<dbReference type="GO" id="GO:0046872">
    <property type="term" value="F:metal ion binding"/>
    <property type="evidence" value="ECO:0007669"/>
    <property type="project" value="UniProtKB-KW"/>
</dbReference>
<dbReference type="FunFam" id="2.60.120.330:FF:000011">
    <property type="entry name" value="Aspartate beta-hydroxylase domain-containing protein 2"/>
    <property type="match status" value="1"/>
</dbReference>
<dbReference type="Gene3D" id="2.60.120.330">
    <property type="entry name" value="B-lactam Antibiotic, Isopenicillin N Synthase, Chain"/>
    <property type="match status" value="1"/>
</dbReference>
<dbReference type="InterPro" id="IPR007803">
    <property type="entry name" value="Asp/Arg/Pro-Hydrxlase"/>
</dbReference>
<dbReference type="InterPro" id="IPR051821">
    <property type="entry name" value="Asp/Asn_beta-hydroxylase"/>
</dbReference>
<dbReference type="InterPro" id="IPR027443">
    <property type="entry name" value="IPNS-like_sf"/>
</dbReference>
<dbReference type="PANTHER" id="PTHR46332">
    <property type="entry name" value="ASPARTATE BETA-HYDROXYLASE DOMAIN-CONTAINING PROTEIN 2"/>
    <property type="match status" value="1"/>
</dbReference>
<dbReference type="PANTHER" id="PTHR46332:SF3">
    <property type="entry name" value="ASPARTATE BETA-HYDROXYLASE DOMAIN-CONTAINING PROTEIN 2"/>
    <property type="match status" value="1"/>
</dbReference>
<dbReference type="Pfam" id="PF05118">
    <property type="entry name" value="Asp_Arg_Hydrox"/>
    <property type="match status" value="1"/>
</dbReference>
<dbReference type="SUPFAM" id="SSF51197">
    <property type="entry name" value="Clavaminate synthase-like"/>
    <property type="match status" value="1"/>
</dbReference>
<protein>
    <recommendedName>
        <fullName>Aspartate beta-hydroxylase domain-containing protein 2</fullName>
        <ecNumber>1.14.11.-</ecNumber>
    </recommendedName>
</protein>
<evidence type="ECO:0000250" key="1"/>
<evidence type="ECO:0000255" key="2"/>
<evidence type="ECO:0000305" key="3"/>
<keyword id="KW-0223">Dioxygenase</keyword>
<keyword id="KW-0325">Glycoprotein</keyword>
<keyword id="KW-0408">Iron</keyword>
<keyword id="KW-0472">Membrane</keyword>
<keyword id="KW-0479">Metal-binding</keyword>
<keyword id="KW-0560">Oxidoreductase</keyword>
<keyword id="KW-1185">Reference proteome</keyword>
<keyword id="KW-0735">Signal-anchor</keyword>
<keyword id="KW-0812">Transmembrane</keyword>
<keyword id="KW-1133">Transmembrane helix</keyword>
<feature type="chain" id="PRO_0000254164" description="Aspartate beta-hydroxylase domain-containing protein 2">
    <location>
        <begin position="1"/>
        <end position="343"/>
    </location>
</feature>
<feature type="topological domain" description="Cytoplasmic" evidence="2">
    <location>
        <begin position="1"/>
        <end position="31"/>
    </location>
</feature>
<feature type="transmembrane region" description="Helical" evidence="2">
    <location>
        <begin position="32"/>
        <end position="52"/>
    </location>
</feature>
<feature type="topological domain" description="Lumenal" evidence="2">
    <location>
        <begin position="53"/>
        <end position="343"/>
    </location>
</feature>
<feature type="binding site" evidence="1">
    <location>
        <position position="202"/>
    </location>
    <ligand>
        <name>2-oxoglutarate</name>
        <dbReference type="ChEBI" id="CHEBI:16810"/>
    </ligand>
</feature>
<feature type="binding site" evidence="1">
    <location>
        <position position="246"/>
    </location>
    <ligand>
        <name>2-oxoglutarate</name>
        <dbReference type="ChEBI" id="CHEBI:16810"/>
    </ligand>
</feature>
<feature type="binding site" evidence="1">
    <location>
        <position position="257"/>
    </location>
    <ligand>
        <name>Fe cation</name>
        <dbReference type="ChEBI" id="CHEBI:24875"/>
    </ligand>
</feature>
<feature type="binding site" evidence="1">
    <location>
        <begin position="266"/>
        <end position="268"/>
    </location>
    <ligand>
        <name>2-oxoglutarate</name>
        <dbReference type="ChEBI" id="CHEBI:16810"/>
    </ligand>
</feature>
<feature type="binding site" evidence="1">
    <location>
        <position position="302"/>
    </location>
    <ligand>
        <name>Fe cation</name>
        <dbReference type="ChEBI" id="CHEBI:24875"/>
    </ligand>
</feature>
<feature type="binding site" evidence="1">
    <location>
        <position position="315"/>
    </location>
    <ligand>
        <name>2-oxoglutarate</name>
        <dbReference type="ChEBI" id="CHEBI:16810"/>
    </ligand>
</feature>
<feature type="glycosylation site" description="N-linked (GlcNAc...) asparagine" evidence="2">
    <location>
        <position position="77"/>
    </location>
</feature>
<feature type="glycosylation site" description="N-linked (GlcNAc...) asparagine" evidence="2">
    <location>
        <position position="185"/>
    </location>
</feature>
<accession>Q5HZW3</accession>
<organism>
    <name type="scientific">Rattus norvegicus</name>
    <name type="common">Rat</name>
    <dbReference type="NCBI Taxonomy" id="10116"/>
    <lineage>
        <taxon>Eukaryota</taxon>
        <taxon>Metazoa</taxon>
        <taxon>Chordata</taxon>
        <taxon>Craniata</taxon>
        <taxon>Vertebrata</taxon>
        <taxon>Euteleostomi</taxon>
        <taxon>Mammalia</taxon>
        <taxon>Eutheria</taxon>
        <taxon>Euarchontoglires</taxon>
        <taxon>Glires</taxon>
        <taxon>Rodentia</taxon>
        <taxon>Myomorpha</taxon>
        <taxon>Muroidea</taxon>
        <taxon>Muridae</taxon>
        <taxon>Murinae</taxon>
        <taxon>Rattus</taxon>
    </lineage>
</organism>